<comment type="function">
    <text evidence="1">Produces ATP from ADP in the presence of a proton gradient across the membrane. The V-type beta chain is a regulatory subunit.</text>
</comment>
<comment type="similarity">
    <text evidence="1">Belongs to the ATPase alpha/beta chains family.</text>
</comment>
<feature type="chain" id="PRO_0000322497" description="V-type ATP synthase beta chain">
    <location>
        <begin position="1"/>
        <end position="470"/>
    </location>
</feature>
<keyword id="KW-0066">ATP synthesis</keyword>
<keyword id="KW-0375">Hydrogen ion transport</keyword>
<keyword id="KW-0406">Ion transport</keyword>
<keyword id="KW-0813">Transport</keyword>
<gene>
    <name evidence="1" type="primary">atpB</name>
    <name type="ordered locus">Dgeo_2046</name>
</gene>
<name>VATB_DEIGD</name>
<organism>
    <name type="scientific">Deinococcus geothermalis (strain DSM 11300 / CIP 105573 / AG-3a)</name>
    <dbReference type="NCBI Taxonomy" id="319795"/>
    <lineage>
        <taxon>Bacteria</taxon>
        <taxon>Thermotogati</taxon>
        <taxon>Deinococcota</taxon>
        <taxon>Deinococci</taxon>
        <taxon>Deinococcales</taxon>
        <taxon>Deinococcaceae</taxon>
        <taxon>Deinococcus</taxon>
    </lineage>
</organism>
<proteinExistence type="inferred from homology"/>
<accession>Q1IWP4</accession>
<evidence type="ECO:0000255" key="1">
    <source>
        <dbReference type="HAMAP-Rule" id="MF_00310"/>
    </source>
</evidence>
<dbReference type="EMBL" id="CP000359">
    <property type="protein sequence ID" value="ABF46340.1"/>
    <property type="molecule type" value="Genomic_DNA"/>
</dbReference>
<dbReference type="RefSeq" id="WP_011531166.1">
    <property type="nucleotide sequence ID" value="NC_008025.1"/>
</dbReference>
<dbReference type="SMR" id="Q1IWP4"/>
<dbReference type="STRING" id="319795.Dgeo_2046"/>
<dbReference type="KEGG" id="dge:Dgeo_2046"/>
<dbReference type="eggNOG" id="COG1156">
    <property type="taxonomic scope" value="Bacteria"/>
</dbReference>
<dbReference type="HOGENOM" id="CLU_022916_0_0_0"/>
<dbReference type="Proteomes" id="UP000002431">
    <property type="component" value="Chromosome"/>
</dbReference>
<dbReference type="GO" id="GO:0005524">
    <property type="term" value="F:ATP binding"/>
    <property type="evidence" value="ECO:0007669"/>
    <property type="project" value="UniProtKB-UniRule"/>
</dbReference>
<dbReference type="GO" id="GO:0046933">
    <property type="term" value="F:proton-transporting ATP synthase activity, rotational mechanism"/>
    <property type="evidence" value="ECO:0007669"/>
    <property type="project" value="UniProtKB-UniRule"/>
</dbReference>
<dbReference type="GO" id="GO:0042777">
    <property type="term" value="P:proton motive force-driven plasma membrane ATP synthesis"/>
    <property type="evidence" value="ECO:0007669"/>
    <property type="project" value="UniProtKB-UniRule"/>
</dbReference>
<dbReference type="CDD" id="cd18112">
    <property type="entry name" value="ATP-synt_V_A-type_beta_C"/>
    <property type="match status" value="1"/>
</dbReference>
<dbReference type="CDD" id="cd18118">
    <property type="entry name" value="ATP-synt_V_A-type_beta_N"/>
    <property type="match status" value="1"/>
</dbReference>
<dbReference type="CDD" id="cd01135">
    <property type="entry name" value="V_A-ATPase_B"/>
    <property type="match status" value="1"/>
</dbReference>
<dbReference type="Gene3D" id="3.40.50.12240">
    <property type="match status" value="1"/>
</dbReference>
<dbReference type="HAMAP" id="MF_00310">
    <property type="entry name" value="ATP_synth_B_arch"/>
    <property type="match status" value="1"/>
</dbReference>
<dbReference type="InterPro" id="IPR055190">
    <property type="entry name" value="ATP-synt_VA_C"/>
</dbReference>
<dbReference type="InterPro" id="IPR020003">
    <property type="entry name" value="ATPase_a/bsu_AS"/>
</dbReference>
<dbReference type="InterPro" id="IPR004100">
    <property type="entry name" value="ATPase_F1/V1/A1_a/bsu_N"/>
</dbReference>
<dbReference type="InterPro" id="IPR000194">
    <property type="entry name" value="ATPase_F1/V1/A1_a/bsu_nucl-bd"/>
</dbReference>
<dbReference type="InterPro" id="IPR027417">
    <property type="entry name" value="P-loop_NTPase"/>
</dbReference>
<dbReference type="InterPro" id="IPR022879">
    <property type="entry name" value="V-ATPase_su_B/beta"/>
</dbReference>
<dbReference type="NCBIfam" id="NF003235">
    <property type="entry name" value="PRK04196.1"/>
    <property type="match status" value="1"/>
</dbReference>
<dbReference type="PANTHER" id="PTHR43389">
    <property type="entry name" value="V-TYPE PROTON ATPASE SUBUNIT B"/>
    <property type="match status" value="1"/>
</dbReference>
<dbReference type="PANTHER" id="PTHR43389:SF4">
    <property type="entry name" value="V-TYPE PROTON ATPASE SUBUNIT B"/>
    <property type="match status" value="1"/>
</dbReference>
<dbReference type="Pfam" id="PF00006">
    <property type="entry name" value="ATP-synt_ab"/>
    <property type="match status" value="1"/>
</dbReference>
<dbReference type="Pfam" id="PF02874">
    <property type="entry name" value="ATP-synt_ab_N"/>
    <property type="match status" value="1"/>
</dbReference>
<dbReference type="Pfam" id="PF22919">
    <property type="entry name" value="ATP-synt_VA_C"/>
    <property type="match status" value="1"/>
</dbReference>
<dbReference type="PIRSF" id="PIRSF039114">
    <property type="entry name" value="V-ATPsynth_beta/V-ATPase_B"/>
    <property type="match status" value="1"/>
</dbReference>
<dbReference type="SUPFAM" id="SSF47917">
    <property type="entry name" value="C-terminal domain of alpha and beta subunits of F1 ATP synthase"/>
    <property type="match status" value="1"/>
</dbReference>
<dbReference type="SUPFAM" id="SSF52540">
    <property type="entry name" value="P-loop containing nucleoside triphosphate hydrolases"/>
    <property type="match status" value="1"/>
</dbReference>
<dbReference type="PROSITE" id="PS00152">
    <property type="entry name" value="ATPASE_ALPHA_BETA"/>
    <property type="match status" value="1"/>
</dbReference>
<reference key="1">
    <citation type="submission" date="2006-04" db="EMBL/GenBank/DDBJ databases">
        <title>Complete sequence of chromosome of Deinococcus geothermalis DSM 11300.</title>
        <authorList>
            <person name="Copeland A."/>
            <person name="Lucas S."/>
            <person name="Lapidus A."/>
            <person name="Barry K."/>
            <person name="Detter J.C."/>
            <person name="Glavina del Rio T."/>
            <person name="Hammon N."/>
            <person name="Israni S."/>
            <person name="Dalin E."/>
            <person name="Tice H."/>
            <person name="Pitluck S."/>
            <person name="Brettin T."/>
            <person name="Bruce D."/>
            <person name="Han C."/>
            <person name="Tapia R."/>
            <person name="Saunders E."/>
            <person name="Gilna P."/>
            <person name="Schmutz J."/>
            <person name="Larimer F."/>
            <person name="Land M."/>
            <person name="Hauser L."/>
            <person name="Kyrpides N."/>
            <person name="Kim E."/>
            <person name="Daly M.J."/>
            <person name="Fredrickson J.K."/>
            <person name="Makarova K.S."/>
            <person name="Gaidamakova E.K."/>
            <person name="Zhai M."/>
            <person name="Richardson P."/>
        </authorList>
    </citation>
    <scope>NUCLEOTIDE SEQUENCE [LARGE SCALE GENOMIC DNA]</scope>
    <source>
        <strain>DSM 11300 / CIP 105573 / AG-3a</strain>
    </source>
</reference>
<sequence>MTTLLKKEYNDVSYISGPLLFVNAASDLAYGAIVEIKDGTGRTRGGQVISVSDENAVIQVFEETRGLDLATASVSLVEDVARLGVSREMIGRRFDGLGRPIDGLPPVVAEKRLNINGEPMNPAARAKPEEFIQTGISTIDVNTSLIRGQKLPIFSGSGLPHNELAAQIARQAKVPGHEGDFAVVFAAMGLTQREVSFFTQEFERTGALARSVLFLNRADDPAVERLLTPRMALTTAEYLAFEHGYHVLVILTDMTNYCEALREIGGAREEIPGRRGFPGYMYTDLASLYERAGVVQGKPGSVTQIPILSMPDDDITHPIPDLTGYITEGQIVVDRGLNAKGIFPPINPLPSLSRLQGNGIGKGKTRADHKNVSDQLFAAYANGLDLRKLVAITGEDALTETDKLYLRFADDFEAYFIGQGDQDRSVEDSLTVAWAILSKLPQSQLTRLSKDAIDKYYGAKLDEMWRGNRI</sequence>
<protein>
    <recommendedName>
        <fullName evidence="1">V-type ATP synthase beta chain</fullName>
    </recommendedName>
    <alternativeName>
        <fullName evidence="1">V-ATPase subunit B</fullName>
    </alternativeName>
</protein>